<gene>
    <name type="primary">GCG</name>
</gene>
<comment type="function">
    <text>Glucagon plays a key role in glucose metabolism and homeostasis. Regulates blood glucose by increasing gluconeogenesis and decreasing glycolysis.</text>
</comment>
<comment type="subcellular location">
    <subcellularLocation>
        <location>Secreted</location>
    </subcellularLocation>
</comment>
<comment type="induction">
    <text>Produced in the A cells of the islets of Langerhans in response to a drop in blood sugar concentration.</text>
</comment>
<comment type="similarity">
    <text evidence="2">Belongs to the glucagon family.</text>
</comment>
<feature type="peptide" id="PRO_0000043917" description="Glucagon">
    <location>
        <begin position="1"/>
        <end position="29"/>
    </location>
</feature>
<feature type="modified residue" description="Phosphoserine" evidence="1">
    <location>
        <position position="2"/>
    </location>
</feature>
<organism>
    <name type="scientific">Chinchilla chinchilla</name>
    <name type="common">Short-tailed chinchilla</name>
    <name type="synonym">Chinchilla brevicaudata</name>
    <dbReference type="NCBI Taxonomy" id="10152"/>
    <lineage>
        <taxon>Eukaryota</taxon>
        <taxon>Metazoa</taxon>
        <taxon>Chordata</taxon>
        <taxon>Craniata</taxon>
        <taxon>Vertebrata</taxon>
        <taxon>Euteleostomi</taxon>
        <taxon>Mammalia</taxon>
        <taxon>Eutheria</taxon>
        <taxon>Euarchontoglires</taxon>
        <taxon>Glires</taxon>
        <taxon>Rodentia</taxon>
        <taxon>Hystricomorpha</taxon>
        <taxon>Chinchillidae</taxon>
        <taxon>Chinchilla</taxon>
    </lineage>
</organism>
<sequence>HSQGTFTSDYSKHLDSRYAQEFVQWLMNT</sequence>
<evidence type="ECO:0000250" key="1">
    <source>
        <dbReference type="UniProtKB" id="P55095"/>
    </source>
</evidence>
<evidence type="ECO:0000305" key="2"/>
<name>GLUC_CHICH</name>
<keyword id="KW-0903">Direct protein sequencing</keyword>
<keyword id="KW-0372">Hormone</keyword>
<keyword id="KW-0597">Phosphoprotein</keyword>
<keyword id="KW-0964">Secreted</keyword>
<protein>
    <recommendedName>
        <fullName>Glucagon</fullName>
    </recommendedName>
</protein>
<dbReference type="PIR" id="A60413">
    <property type="entry name" value="GCCB"/>
</dbReference>
<dbReference type="SMR" id="P31297"/>
<dbReference type="GO" id="GO:0005615">
    <property type="term" value="C:extracellular space"/>
    <property type="evidence" value="ECO:0007669"/>
    <property type="project" value="TreeGrafter"/>
</dbReference>
<dbReference type="GO" id="GO:0031769">
    <property type="term" value="F:glucagon receptor binding"/>
    <property type="evidence" value="ECO:0007669"/>
    <property type="project" value="TreeGrafter"/>
</dbReference>
<dbReference type="GO" id="GO:0005179">
    <property type="term" value="F:hormone activity"/>
    <property type="evidence" value="ECO:0007669"/>
    <property type="project" value="UniProtKB-KW"/>
</dbReference>
<dbReference type="GO" id="GO:0007188">
    <property type="term" value="P:adenylate cyclase-modulating G protein-coupled receptor signaling pathway"/>
    <property type="evidence" value="ECO:0007669"/>
    <property type="project" value="TreeGrafter"/>
</dbReference>
<dbReference type="GO" id="GO:0043066">
    <property type="term" value="P:negative regulation of apoptotic process"/>
    <property type="evidence" value="ECO:0007669"/>
    <property type="project" value="TreeGrafter"/>
</dbReference>
<dbReference type="GO" id="GO:0035774">
    <property type="term" value="P:positive regulation of insulin secretion involved in cellular response to glucose stimulus"/>
    <property type="evidence" value="ECO:0007669"/>
    <property type="project" value="TreeGrafter"/>
</dbReference>
<dbReference type="GO" id="GO:0010737">
    <property type="term" value="P:protein kinase A signaling"/>
    <property type="evidence" value="ECO:0007669"/>
    <property type="project" value="TreeGrafter"/>
</dbReference>
<dbReference type="Gene3D" id="6.10.250.590">
    <property type="match status" value="1"/>
</dbReference>
<dbReference type="InterPro" id="IPR015550">
    <property type="entry name" value="Glucagon"/>
</dbReference>
<dbReference type="InterPro" id="IPR000532">
    <property type="entry name" value="Glucagon_GIP_secretin_VIP"/>
</dbReference>
<dbReference type="PANTHER" id="PTHR11418">
    <property type="entry name" value="GLUCAGON"/>
    <property type="match status" value="1"/>
</dbReference>
<dbReference type="PANTHER" id="PTHR11418:SF0">
    <property type="entry name" value="PRO-GLUCAGON"/>
    <property type="match status" value="1"/>
</dbReference>
<dbReference type="Pfam" id="PF00123">
    <property type="entry name" value="Hormone_2"/>
    <property type="match status" value="1"/>
</dbReference>
<dbReference type="PRINTS" id="PR00275">
    <property type="entry name" value="GLUCAGON"/>
</dbReference>
<dbReference type="SMART" id="SM00070">
    <property type="entry name" value="GLUCA"/>
    <property type="match status" value="1"/>
</dbReference>
<dbReference type="PROSITE" id="PS00260">
    <property type="entry name" value="GLUCAGON"/>
    <property type="match status" value="1"/>
</dbReference>
<proteinExistence type="evidence at protein level"/>
<accession>P31297</accession>
<reference key="1">
    <citation type="journal article" date="1990" name="Peptides">
        <title>Purification of peptide hormones from chinchilla pancreas by chemical assay.</title>
        <authorList>
            <person name="Eng J."/>
            <person name="Kleinman W.A."/>
            <person name="Chu L.S."/>
        </authorList>
    </citation>
    <scope>PROTEIN SEQUENCE</scope>
</reference>